<feature type="chain" id="PRO_0000074685" description="Aerobic respiration control sensor protein ArcB">
    <location>
        <begin position="1"/>
        <end position="778"/>
    </location>
</feature>
<feature type="topological domain" description="Cytoplasmic" evidence="2">
    <location>
        <begin position="1"/>
        <end position="25"/>
    </location>
</feature>
<feature type="transmembrane region" description="Helical" evidence="2">
    <location>
        <begin position="26"/>
        <end position="46"/>
    </location>
</feature>
<feature type="topological domain" description="Periplasmic" evidence="2">
    <location>
        <begin position="47"/>
        <end position="57"/>
    </location>
</feature>
<feature type="transmembrane region" description="Helical" evidence="2">
    <location>
        <begin position="58"/>
        <end position="78"/>
    </location>
</feature>
<feature type="topological domain" description="Cytoplasmic" evidence="2">
    <location>
        <begin position="79"/>
        <end position="778"/>
    </location>
</feature>
<feature type="domain" description="PAS" evidence="5">
    <location>
        <begin position="153"/>
        <end position="223"/>
    </location>
</feature>
<feature type="domain" description="PAC" evidence="6">
    <location>
        <begin position="226"/>
        <end position="278"/>
    </location>
</feature>
<feature type="domain" description="Histidine kinase" evidence="3">
    <location>
        <begin position="289"/>
        <end position="507"/>
    </location>
</feature>
<feature type="domain" description="Response regulatory" evidence="7">
    <location>
        <begin position="527"/>
        <end position="643"/>
    </location>
</feature>
<feature type="domain" description="HPt" evidence="4">
    <location>
        <begin position="678"/>
        <end position="771"/>
    </location>
</feature>
<feature type="modified residue" description="Phosphohistidine; by autocatalysis" evidence="3">
    <location>
        <position position="292"/>
    </location>
</feature>
<feature type="modified residue" description="4-aspartylphosphate" evidence="7">
    <location>
        <position position="576"/>
    </location>
</feature>
<feature type="modified residue" description="Phosphohistidine" evidence="4">
    <location>
        <position position="717"/>
    </location>
</feature>
<protein>
    <recommendedName>
        <fullName>Aerobic respiration control sensor protein ArcB</fullName>
        <ecNumber>2.7.13.3</ecNumber>
    </recommendedName>
</protein>
<name>ARCB_ECO57</name>
<keyword id="KW-0067">ATP-binding</keyword>
<keyword id="KW-0997">Cell inner membrane</keyword>
<keyword id="KW-1003">Cell membrane</keyword>
<keyword id="KW-0418">Kinase</keyword>
<keyword id="KW-0472">Membrane</keyword>
<keyword id="KW-0547">Nucleotide-binding</keyword>
<keyword id="KW-0597">Phosphoprotein</keyword>
<keyword id="KW-1185">Reference proteome</keyword>
<keyword id="KW-0804">Transcription</keyword>
<keyword id="KW-0805">Transcription regulation</keyword>
<keyword id="KW-0808">Transferase</keyword>
<keyword id="KW-0812">Transmembrane</keyword>
<keyword id="KW-1133">Transmembrane helix</keyword>
<keyword id="KW-0902">Two-component regulatory system</keyword>
<gene>
    <name type="primary">arcB</name>
    <name type="ordered locus">Z4574</name>
    <name type="ordered locus">ECs4089</name>
</gene>
<dbReference type="EC" id="2.7.13.3"/>
<dbReference type="EMBL" id="AE005174">
    <property type="protein sequence ID" value="AAG58344.1"/>
    <property type="molecule type" value="Genomic_DNA"/>
</dbReference>
<dbReference type="EMBL" id="BA000007">
    <property type="protein sequence ID" value="BAB37512.1"/>
    <property type="molecule type" value="Genomic_DNA"/>
</dbReference>
<dbReference type="PIR" id="A91140">
    <property type="entry name" value="A91140"/>
</dbReference>
<dbReference type="PIR" id="D85985">
    <property type="entry name" value="D85985"/>
</dbReference>
<dbReference type="RefSeq" id="NP_312116.1">
    <property type="nucleotide sequence ID" value="NC_002695.1"/>
</dbReference>
<dbReference type="RefSeq" id="WP_000809770.1">
    <property type="nucleotide sequence ID" value="NZ_VOAI01000014.1"/>
</dbReference>
<dbReference type="BMRB" id="P58363"/>
<dbReference type="SMR" id="P58363"/>
<dbReference type="STRING" id="155864.Z4574"/>
<dbReference type="GeneID" id="916062"/>
<dbReference type="KEGG" id="ece:Z4574"/>
<dbReference type="KEGG" id="ecs:ECs_4089"/>
<dbReference type="PATRIC" id="fig|386585.9.peg.4268"/>
<dbReference type="eggNOG" id="COG0784">
    <property type="taxonomic scope" value="Bacteria"/>
</dbReference>
<dbReference type="eggNOG" id="COG2198">
    <property type="taxonomic scope" value="Bacteria"/>
</dbReference>
<dbReference type="eggNOG" id="COG5002">
    <property type="taxonomic scope" value="Bacteria"/>
</dbReference>
<dbReference type="HOGENOM" id="CLU_000445_114_15_6"/>
<dbReference type="OMA" id="AMLEQYI"/>
<dbReference type="BRENDA" id="2.7.13.3">
    <property type="organism ID" value="2026"/>
</dbReference>
<dbReference type="Proteomes" id="UP000000558">
    <property type="component" value="Chromosome"/>
</dbReference>
<dbReference type="Proteomes" id="UP000002519">
    <property type="component" value="Chromosome"/>
</dbReference>
<dbReference type="GO" id="GO:0005886">
    <property type="term" value="C:plasma membrane"/>
    <property type="evidence" value="ECO:0007669"/>
    <property type="project" value="UniProtKB-SubCell"/>
</dbReference>
<dbReference type="GO" id="GO:0005524">
    <property type="term" value="F:ATP binding"/>
    <property type="evidence" value="ECO:0007669"/>
    <property type="project" value="UniProtKB-KW"/>
</dbReference>
<dbReference type="GO" id="GO:0009927">
    <property type="term" value="F:histidine phosphotransfer kinase activity"/>
    <property type="evidence" value="ECO:0007669"/>
    <property type="project" value="TreeGrafter"/>
</dbReference>
<dbReference type="GO" id="GO:0000155">
    <property type="term" value="F:phosphorelay sensor kinase activity"/>
    <property type="evidence" value="ECO:0007669"/>
    <property type="project" value="InterPro"/>
</dbReference>
<dbReference type="GO" id="GO:0006355">
    <property type="term" value="P:regulation of DNA-templated transcription"/>
    <property type="evidence" value="ECO:0007669"/>
    <property type="project" value="InterPro"/>
</dbReference>
<dbReference type="CDD" id="cd16922">
    <property type="entry name" value="HATPase_EvgS-ArcB-TorS-like"/>
    <property type="match status" value="1"/>
</dbReference>
<dbReference type="CDD" id="cd00082">
    <property type="entry name" value="HisKA"/>
    <property type="match status" value="1"/>
</dbReference>
<dbReference type="CDD" id="cd00088">
    <property type="entry name" value="HPT"/>
    <property type="match status" value="1"/>
</dbReference>
<dbReference type="CDD" id="cd00130">
    <property type="entry name" value="PAS"/>
    <property type="match status" value="1"/>
</dbReference>
<dbReference type="CDD" id="cd17546">
    <property type="entry name" value="REC_hyHK_CKI1_RcsC-like"/>
    <property type="match status" value="1"/>
</dbReference>
<dbReference type="FunFam" id="1.10.287.130:FF:000016">
    <property type="entry name" value="Aerobic respiration control sensor protein"/>
    <property type="match status" value="1"/>
</dbReference>
<dbReference type="FunFam" id="1.10.287.970:FF:000001">
    <property type="entry name" value="Aerobic respiration control sensor protein"/>
    <property type="match status" value="1"/>
</dbReference>
<dbReference type="FunFam" id="1.20.120.160:FF:000003">
    <property type="entry name" value="Aerobic respiration control sensor protein"/>
    <property type="match status" value="1"/>
</dbReference>
<dbReference type="FunFam" id="3.30.450.20:FF:000032">
    <property type="entry name" value="Aerobic respiration control sensor protein"/>
    <property type="match status" value="1"/>
</dbReference>
<dbReference type="FunFam" id="3.30.565.10:FF:000025">
    <property type="entry name" value="Aerobic respiration control sensor protein"/>
    <property type="match status" value="1"/>
</dbReference>
<dbReference type="FunFam" id="3.40.50.2300:FF:000107">
    <property type="entry name" value="Aerobic respiration control sensor protein"/>
    <property type="match status" value="1"/>
</dbReference>
<dbReference type="Gene3D" id="1.10.287.130">
    <property type="match status" value="1"/>
</dbReference>
<dbReference type="Gene3D" id="3.40.50.2300">
    <property type="match status" value="1"/>
</dbReference>
<dbReference type="Gene3D" id="1.10.287.970">
    <property type="entry name" value="His Kinase A (phosphoacceptor) domain"/>
    <property type="match status" value="1"/>
</dbReference>
<dbReference type="Gene3D" id="3.30.565.10">
    <property type="entry name" value="Histidine kinase-like ATPase, C-terminal domain"/>
    <property type="match status" value="1"/>
</dbReference>
<dbReference type="Gene3D" id="1.20.120.160">
    <property type="entry name" value="HPT domain"/>
    <property type="match status" value="1"/>
</dbReference>
<dbReference type="Gene3D" id="3.30.450.20">
    <property type="entry name" value="PAS domain"/>
    <property type="match status" value="1"/>
</dbReference>
<dbReference type="InterPro" id="IPR027460">
    <property type="entry name" value="ArcB_TM_sf"/>
</dbReference>
<dbReference type="InterPro" id="IPR011006">
    <property type="entry name" value="CheY-like_superfamily"/>
</dbReference>
<dbReference type="InterPro" id="IPR036890">
    <property type="entry name" value="HATPase_C_sf"/>
</dbReference>
<dbReference type="InterPro" id="IPR005467">
    <property type="entry name" value="His_kinase_dom"/>
</dbReference>
<dbReference type="InterPro" id="IPR003661">
    <property type="entry name" value="HisK_dim/P_dom"/>
</dbReference>
<dbReference type="InterPro" id="IPR036097">
    <property type="entry name" value="HisK_dim/P_sf"/>
</dbReference>
<dbReference type="InterPro" id="IPR040642">
    <property type="entry name" value="HKR_ArcB_TM"/>
</dbReference>
<dbReference type="InterPro" id="IPR036641">
    <property type="entry name" value="HPT_dom_sf"/>
</dbReference>
<dbReference type="InterPro" id="IPR000014">
    <property type="entry name" value="PAS"/>
</dbReference>
<dbReference type="InterPro" id="IPR000700">
    <property type="entry name" value="PAS-assoc_C"/>
</dbReference>
<dbReference type="InterPro" id="IPR035965">
    <property type="entry name" value="PAS-like_dom_sf"/>
</dbReference>
<dbReference type="InterPro" id="IPR013767">
    <property type="entry name" value="PAS_fold"/>
</dbReference>
<dbReference type="InterPro" id="IPR004358">
    <property type="entry name" value="Sig_transdc_His_kin-like_C"/>
</dbReference>
<dbReference type="InterPro" id="IPR008207">
    <property type="entry name" value="Sig_transdc_His_kin_Hpt_dom"/>
</dbReference>
<dbReference type="InterPro" id="IPR014409">
    <property type="entry name" value="Sig_transdc_His_kin_hyb_ArcB"/>
</dbReference>
<dbReference type="InterPro" id="IPR001789">
    <property type="entry name" value="Sig_transdc_resp-reg_receiver"/>
</dbReference>
<dbReference type="NCBIfam" id="NF008302">
    <property type="entry name" value="PRK11091.1"/>
    <property type="match status" value="1"/>
</dbReference>
<dbReference type="NCBIfam" id="TIGR00229">
    <property type="entry name" value="sensory_box"/>
    <property type="match status" value="1"/>
</dbReference>
<dbReference type="PANTHER" id="PTHR43047:SF72">
    <property type="entry name" value="OSMOSENSING HISTIDINE PROTEIN KINASE SLN1"/>
    <property type="match status" value="1"/>
</dbReference>
<dbReference type="PANTHER" id="PTHR43047">
    <property type="entry name" value="TWO-COMPONENT HISTIDINE PROTEIN KINASE"/>
    <property type="match status" value="1"/>
</dbReference>
<dbReference type="Pfam" id="PF02518">
    <property type="entry name" value="HATPase_c"/>
    <property type="match status" value="1"/>
</dbReference>
<dbReference type="Pfam" id="PF00512">
    <property type="entry name" value="HisKA"/>
    <property type="match status" value="1"/>
</dbReference>
<dbReference type="Pfam" id="PF18415">
    <property type="entry name" value="HKR_ArcB_TM"/>
    <property type="match status" value="1"/>
</dbReference>
<dbReference type="Pfam" id="PF01627">
    <property type="entry name" value="Hpt"/>
    <property type="match status" value="1"/>
</dbReference>
<dbReference type="Pfam" id="PF00989">
    <property type="entry name" value="PAS"/>
    <property type="match status" value="1"/>
</dbReference>
<dbReference type="Pfam" id="PF00072">
    <property type="entry name" value="Response_reg"/>
    <property type="match status" value="1"/>
</dbReference>
<dbReference type="PIRSF" id="PIRSF003182">
    <property type="entry name" value="ArcB"/>
    <property type="match status" value="1"/>
</dbReference>
<dbReference type="PRINTS" id="PR00344">
    <property type="entry name" value="BCTRLSENSOR"/>
</dbReference>
<dbReference type="SMART" id="SM00387">
    <property type="entry name" value="HATPase_c"/>
    <property type="match status" value="1"/>
</dbReference>
<dbReference type="SMART" id="SM00388">
    <property type="entry name" value="HisKA"/>
    <property type="match status" value="1"/>
</dbReference>
<dbReference type="SMART" id="SM00073">
    <property type="entry name" value="HPT"/>
    <property type="match status" value="1"/>
</dbReference>
<dbReference type="SMART" id="SM00091">
    <property type="entry name" value="PAS"/>
    <property type="match status" value="1"/>
</dbReference>
<dbReference type="SMART" id="SM00448">
    <property type="entry name" value="REC"/>
    <property type="match status" value="1"/>
</dbReference>
<dbReference type="SUPFAM" id="SSF55874">
    <property type="entry name" value="ATPase domain of HSP90 chaperone/DNA topoisomerase II/histidine kinase"/>
    <property type="match status" value="1"/>
</dbReference>
<dbReference type="SUPFAM" id="SSF52172">
    <property type="entry name" value="CheY-like"/>
    <property type="match status" value="1"/>
</dbReference>
<dbReference type="SUPFAM" id="SSF47226">
    <property type="entry name" value="Histidine-containing phosphotransfer domain, HPT domain"/>
    <property type="match status" value="1"/>
</dbReference>
<dbReference type="SUPFAM" id="SSF47384">
    <property type="entry name" value="Homodimeric domain of signal transducing histidine kinase"/>
    <property type="match status" value="1"/>
</dbReference>
<dbReference type="SUPFAM" id="SSF55785">
    <property type="entry name" value="PYP-like sensor domain (PAS domain)"/>
    <property type="match status" value="1"/>
</dbReference>
<dbReference type="PROSITE" id="PS50109">
    <property type="entry name" value="HIS_KIN"/>
    <property type="match status" value="1"/>
</dbReference>
<dbReference type="PROSITE" id="PS50894">
    <property type="entry name" value="HPT"/>
    <property type="match status" value="1"/>
</dbReference>
<dbReference type="PROSITE" id="PS50113">
    <property type="entry name" value="PAC"/>
    <property type="match status" value="1"/>
</dbReference>
<dbReference type="PROSITE" id="PS50112">
    <property type="entry name" value="PAS"/>
    <property type="match status" value="1"/>
</dbReference>
<dbReference type="PROSITE" id="PS50110">
    <property type="entry name" value="RESPONSE_REGULATORY"/>
    <property type="match status" value="1"/>
</dbReference>
<comment type="function">
    <text evidence="1">Member of the two-component regulatory system ArcB/ArcA. Sensor-regulator protein for anaerobic repression of the arc modulon. Activates ArcA via a four-step phosphorelay. ArcB can also dephosphorylate ArcA by a reverse phosphorelay involving His-717 and Asp-576 (By similarity).</text>
</comment>
<comment type="catalytic activity">
    <reaction>
        <text>ATP + protein L-histidine = ADP + protein N-phospho-L-histidine.</text>
        <dbReference type="EC" id="2.7.13.3"/>
    </reaction>
</comment>
<comment type="subcellular location">
    <subcellularLocation>
        <location evidence="1">Cell inner membrane</location>
        <topology evidence="1">Multi-pass membrane protein</topology>
    </subcellularLocation>
</comment>
<comment type="PTM">
    <text evidence="1">Activation requires a sequential transfer of a phosphate group from a His in the primary transmitter domain, to an Asp in the receiver domain and to a His in the secondary transmitter domain.</text>
</comment>
<reference key="1">
    <citation type="journal article" date="2001" name="Nature">
        <title>Genome sequence of enterohaemorrhagic Escherichia coli O157:H7.</title>
        <authorList>
            <person name="Perna N.T."/>
            <person name="Plunkett G. III"/>
            <person name="Burland V."/>
            <person name="Mau B."/>
            <person name="Glasner J.D."/>
            <person name="Rose D.J."/>
            <person name="Mayhew G.F."/>
            <person name="Evans P.S."/>
            <person name="Gregor J."/>
            <person name="Kirkpatrick H.A."/>
            <person name="Posfai G."/>
            <person name="Hackett J."/>
            <person name="Klink S."/>
            <person name="Boutin A."/>
            <person name="Shao Y."/>
            <person name="Miller L."/>
            <person name="Grotbeck E.J."/>
            <person name="Davis N.W."/>
            <person name="Lim A."/>
            <person name="Dimalanta E.T."/>
            <person name="Potamousis K."/>
            <person name="Apodaca J."/>
            <person name="Anantharaman T.S."/>
            <person name="Lin J."/>
            <person name="Yen G."/>
            <person name="Schwartz D.C."/>
            <person name="Welch R.A."/>
            <person name="Blattner F.R."/>
        </authorList>
    </citation>
    <scope>NUCLEOTIDE SEQUENCE [LARGE SCALE GENOMIC DNA]</scope>
    <source>
        <strain>O157:H7 / EDL933 / ATCC 700927 / EHEC</strain>
    </source>
</reference>
<reference key="2">
    <citation type="journal article" date="2001" name="DNA Res.">
        <title>Complete genome sequence of enterohemorrhagic Escherichia coli O157:H7 and genomic comparison with a laboratory strain K-12.</title>
        <authorList>
            <person name="Hayashi T."/>
            <person name="Makino K."/>
            <person name="Ohnishi M."/>
            <person name="Kurokawa K."/>
            <person name="Ishii K."/>
            <person name="Yokoyama K."/>
            <person name="Han C.-G."/>
            <person name="Ohtsubo E."/>
            <person name="Nakayama K."/>
            <person name="Murata T."/>
            <person name="Tanaka M."/>
            <person name="Tobe T."/>
            <person name="Iida T."/>
            <person name="Takami H."/>
            <person name="Honda T."/>
            <person name="Sasakawa C."/>
            <person name="Ogasawara N."/>
            <person name="Yasunaga T."/>
            <person name="Kuhara S."/>
            <person name="Shiba T."/>
            <person name="Hattori M."/>
            <person name="Shinagawa H."/>
        </authorList>
    </citation>
    <scope>NUCLEOTIDE SEQUENCE [LARGE SCALE GENOMIC DNA]</scope>
    <source>
        <strain>O157:H7 / Sakai / RIMD 0509952 / EHEC</strain>
    </source>
</reference>
<organism>
    <name type="scientific">Escherichia coli O157:H7</name>
    <dbReference type="NCBI Taxonomy" id="83334"/>
    <lineage>
        <taxon>Bacteria</taxon>
        <taxon>Pseudomonadati</taxon>
        <taxon>Pseudomonadota</taxon>
        <taxon>Gammaproteobacteria</taxon>
        <taxon>Enterobacterales</taxon>
        <taxon>Enterobacteriaceae</taxon>
        <taxon>Escherichia</taxon>
    </lineage>
</organism>
<sequence length="778" mass="88010">MKQIRLLAQYYVDLMMKLGLVRFSMLLALALVVLAIVVQMAVTMVLHGQVESIDVIRSIFFGLLITPWAVYFLSVVVEQLEESRQRLSRLVQKLEEMRERDLSLNVQLKDNIAQLNQEIAVREKAEAELQETFGQLKIEIKEREETQIQLEQQSSFLRSFLDASPDLVFYRNEDKEFSGCNRAMELLTGKSEKQLVHLKPADVYSPEAAAKVIETDEKVFRHNVSLTYEQWLDYPDGRKACFEIRKVPYYDRVGKRHGLMGFGRDITERKRYQDALERASRDKTTFISTISHELRTPLNGIVGLSRILLDTELTAEQEKYLKTIHVSAVTLGNIFNDIIDMDKMERRKVQLDNQPVDFTSFLADLENLSALQAQQKGLRFNLEPTLPLPHQVITDGTRLRQILWNLISNAVKFTQQGQVTVRVRYDEGDMLHFEVEDSGIGIPQDELDKIFAMYYQVKDSHGGKPATGTGIGLAVSRRLAKNMGGDITVTSEQGKGSTFTLTIHAPSVAEEVDDAFDEDDMPLPALNVLLVEDIELNVIVARSVLEKLGNSVDVAMTGKAALEMFKPGEYDLVLLDIQLPDMTGLDISRELTKRYPREDLPPLVALTANVLKDKQEYLNAGMDDVLSKPLSVPALTAMIKKFWDTQDDEESTVTTEENSKSEALLDIPMLEQYLELVGPKLITDGLAVFEKMMPGYVNVLESNLTAQDKKGIVEEGHKIKGAAGSVGLRHLQQLGQQIQSPDLPAWEDNVGEWIEEMKEEWRHDVEVLKAWVAKATKK</sequence>
<proteinExistence type="inferred from homology"/>
<evidence type="ECO:0000250" key="1"/>
<evidence type="ECO:0000255" key="2"/>
<evidence type="ECO:0000255" key="3">
    <source>
        <dbReference type="PROSITE-ProRule" id="PRU00107"/>
    </source>
</evidence>
<evidence type="ECO:0000255" key="4">
    <source>
        <dbReference type="PROSITE-ProRule" id="PRU00110"/>
    </source>
</evidence>
<evidence type="ECO:0000255" key="5">
    <source>
        <dbReference type="PROSITE-ProRule" id="PRU00140"/>
    </source>
</evidence>
<evidence type="ECO:0000255" key="6">
    <source>
        <dbReference type="PROSITE-ProRule" id="PRU00141"/>
    </source>
</evidence>
<evidence type="ECO:0000255" key="7">
    <source>
        <dbReference type="PROSITE-ProRule" id="PRU00169"/>
    </source>
</evidence>
<accession>P58363</accession>